<proteinExistence type="evidence at protein level"/>
<reference key="1">
    <citation type="journal article" date="1996" name="Yeast">
        <title>The sequence of a 24,152 bp segment from the left arm of chromosome XIV from Saccharomyces cerevisiae between the BNI1 and the POL2 genes.</title>
        <authorList>
            <person name="Sen-Gupta M."/>
            <person name="Lyck R."/>
            <person name="Fleig U."/>
            <person name="Niedenthal R.K."/>
            <person name="Hegemann J.H."/>
        </authorList>
    </citation>
    <scope>NUCLEOTIDE SEQUENCE [GENOMIC DNA]</scope>
    <source>
        <strain>ATCC 96604 / S288c / FY1679</strain>
    </source>
</reference>
<reference key="2">
    <citation type="journal article" date="1997" name="Nature">
        <title>The nucleotide sequence of Saccharomyces cerevisiae chromosome XIV and its evolutionary implications.</title>
        <authorList>
            <person name="Philippsen P."/>
            <person name="Kleine K."/>
            <person name="Poehlmann R."/>
            <person name="Duesterhoeft A."/>
            <person name="Hamberg K."/>
            <person name="Hegemann J.H."/>
            <person name="Obermaier B."/>
            <person name="Urrestarazu L.A."/>
            <person name="Aert R."/>
            <person name="Albermann K."/>
            <person name="Altmann R."/>
            <person name="Andre B."/>
            <person name="Baladron V."/>
            <person name="Ballesta J.P.G."/>
            <person name="Becam A.-M."/>
            <person name="Beinhauer J.D."/>
            <person name="Boskovic J."/>
            <person name="Buitrago M.J."/>
            <person name="Bussereau F."/>
            <person name="Coster F."/>
            <person name="Crouzet M."/>
            <person name="D'Angelo M."/>
            <person name="Dal Pero F."/>
            <person name="De Antoni A."/>
            <person name="del Rey F."/>
            <person name="Doignon F."/>
            <person name="Domdey H."/>
            <person name="Dubois E."/>
            <person name="Fiedler T.A."/>
            <person name="Fleig U."/>
            <person name="Floeth M."/>
            <person name="Fritz C."/>
            <person name="Gaillardin C."/>
            <person name="Garcia-Cantalejo J.M."/>
            <person name="Glansdorff N."/>
            <person name="Goffeau A."/>
            <person name="Gueldener U."/>
            <person name="Herbert C.J."/>
            <person name="Heumann K."/>
            <person name="Heuss-Neitzel D."/>
            <person name="Hilbert H."/>
            <person name="Hinni K."/>
            <person name="Iraqui Houssaini I."/>
            <person name="Jacquet M."/>
            <person name="Jimenez A."/>
            <person name="Jonniaux J.-L."/>
            <person name="Karpfinger-Hartl L."/>
            <person name="Lanfranchi G."/>
            <person name="Lepingle A."/>
            <person name="Levesque H."/>
            <person name="Lyck R."/>
            <person name="Maftahi M."/>
            <person name="Mallet L."/>
            <person name="Maurer C.T.C."/>
            <person name="Messenguy F."/>
            <person name="Mewes H.-W."/>
            <person name="Moestl D."/>
            <person name="Nasr F."/>
            <person name="Nicaud J.-M."/>
            <person name="Niedenthal R.K."/>
            <person name="Pandolfo D."/>
            <person name="Pierard A."/>
            <person name="Piravandi E."/>
            <person name="Planta R.J."/>
            <person name="Pohl T.M."/>
            <person name="Purnelle B."/>
            <person name="Rebischung C."/>
            <person name="Remacha M.A."/>
            <person name="Revuelta J.L."/>
            <person name="Rinke M."/>
            <person name="Saiz J.E."/>
            <person name="Sartorello F."/>
            <person name="Scherens B."/>
            <person name="Sen-Gupta M."/>
            <person name="Soler-Mira A."/>
            <person name="Urbanus J.H.M."/>
            <person name="Valle G."/>
            <person name="Van Dyck L."/>
            <person name="Verhasselt P."/>
            <person name="Vierendeels F."/>
            <person name="Vissers S."/>
            <person name="Voet M."/>
            <person name="Volckaert G."/>
            <person name="Wach A."/>
            <person name="Wambutt R."/>
            <person name="Wedler H."/>
            <person name="Zollner A."/>
            <person name="Hani J."/>
        </authorList>
    </citation>
    <scope>NUCLEOTIDE SEQUENCE [LARGE SCALE GENOMIC DNA]</scope>
    <source>
        <strain>ATCC 204508 / S288c</strain>
    </source>
</reference>
<reference key="3">
    <citation type="journal article" date="2014" name="G3 (Bethesda)">
        <title>The reference genome sequence of Saccharomyces cerevisiae: Then and now.</title>
        <authorList>
            <person name="Engel S.R."/>
            <person name="Dietrich F.S."/>
            <person name="Fisk D.G."/>
            <person name="Binkley G."/>
            <person name="Balakrishnan R."/>
            <person name="Costanzo M.C."/>
            <person name="Dwight S.S."/>
            <person name="Hitz B.C."/>
            <person name="Karra K."/>
            <person name="Nash R.S."/>
            <person name="Weng S."/>
            <person name="Wong E.D."/>
            <person name="Lloyd P."/>
            <person name="Skrzypek M.S."/>
            <person name="Miyasato S.R."/>
            <person name="Simison M."/>
            <person name="Cherry J.M."/>
        </authorList>
    </citation>
    <scope>GENOME REANNOTATION</scope>
    <source>
        <strain>ATCC 204508 / S288c</strain>
    </source>
</reference>
<reference key="4">
    <citation type="journal article" date="2000" name="EMBO J.">
        <title>A novel Golgi membrane protein is part of a GTPase-binding protein complex involved in vesicle targeting.</title>
        <authorList>
            <person name="Matern H.T."/>
            <person name="Yang X."/>
            <person name="Andrulis E."/>
            <person name="Sternglanz R."/>
            <person name="Trepte H.-H."/>
            <person name="Gallwitz D."/>
        </authorList>
    </citation>
    <scope>INTERACTION WITH YIP1</scope>
    <scope>TOPOLOGY</scope>
    <scope>SUBCELLULAR LOCATION</scope>
</reference>
<reference key="5">
    <citation type="journal article" date="2001" name="J. Cell Biol.">
        <title>Erv41p and Erv46p: new components of COPII vesicles involved in transport between the ER and Golgi complex.</title>
        <authorList>
            <person name="Otte S."/>
            <person name="Belden W.J."/>
            <person name="Heidtman M."/>
            <person name="Liu J."/>
            <person name="Jensen O.N."/>
            <person name="Barlowe C."/>
        </authorList>
    </citation>
    <scope>SUBCELLULAR LOCATION</scope>
    <scope>IDENTIFICATION BY MASS SPECTROMETRY</scope>
</reference>
<reference key="6">
    <citation type="journal article" date="2002" name="FEBS Lett.">
        <title>Identification of the novel proteins Yip4p and Yip5p as Rab GTPase interacting factors.</title>
        <authorList>
            <person name="Calero M."/>
            <person name="Winand N.J."/>
            <person name="Collins R.N."/>
        </authorList>
    </citation>
    <scope>INTERACTION WITH SEC4; YIP4; YIP5; YPT1; YPT6; YPT7; YPT10; YPT11; YPT31; YPT32 AND YPT52</scope>
</reference>
<reference key="7">
    <citation type="journal article" date="2003" name="Biochem. Biophys. Res. Commun.">
        <title>The yeast model for Batten disease: a role for Btn2p in the trafficking of the Golgi-associated vesicular targeting protein, Yif1p.</title>
        <authorList>
            <person name="Chattopadhyay S."/>
            <person name="Roberts P.M."/>
            <person name="Pearce D.A."/>
        </authorList>
    </citation>
    <scope>INTERACTION WITH BTN2</scope>
</reference>
<reference key="8">
    <citation type="journal article" date="2003" name="J. Biol. Chem.">
        <title>The Yip1p.Yif1p complex is required for the fusion competence of endoplasmic reticulum-derived vesicles.</title>
        <authorList>
            <person name="Barrowman J."/>
            <person name="Wang W."/>
            <person name="Zhang Y."/>
            <person name="Ferro-Novick S."/>
        </authorList>
    </citation>
    <scope>FUNCTION</scope>
    <scope>INTERACTION WITH BOS1; SEC22 AND YPT1</scope>
</reference>
<reference key="9">
    <citation type="journal article" date="2004" name="Mol. Cell. Proteomics">
        <title>The phox homology (PX) domain protein interaction network in yeast.</title>
        <authorList>
            <person name="Vollert C.S."/>
            <person name="Uetz P."/>
        </authorList>
    </citation>
    <scope>INTERACTION WITH SNX3</scope>
</reference>
<reference key="10">
    <citation type="journal article" date="2005" name="Mol. Cell. Biol.">
        <title>Immunoisolation of the yeast Golgi subcompartments and characterization of a novel membrane protein, Svp26, discovered in the Sed5-containing compartments.</title>
        <authorList>
            <person name="Inadome H."/>
            <person name="Noda Y."/>
            <person name="Adachi H."/>
            <person name="Yoda K."/>
        </authorList>
    </citation>
    <scope>SUBCELLULAR LOCATION</scope>
    <scope>IDENTIFICATION BY MASS SPECTROMETRY</scope>
</reference>
<reference key="11">
    <citation type="journal article" date="2006" name="Proc. Natl. Acad. Sci. U.S.A.">
        <title>A global topology map of the Saccharomyces cerevisiae membrane proteome.</title>
        <authorList>
            <person name="Kim H."/>
            <person name="Melen K."/>
            <person name="Oesterberg M."/>
            <person name="von Heijne G."/>
        </authorList>
    </citation>
    <scope>TOPOLOGY [LARGE SCALE ANALYSIS]</scope>
    <source>
        <strain>ATCC 208353 / W303-1A</strain>
    </source>
</reference>
<reference key="12">
    <citation type="journal article" date="2012" name="Proc. Natl. Acad. Sci. U.S.A.">
        <title>N-terminal acetylome analyses and functional insights of the N-terminal acetyltransferase NatB.</title>
        <authorList>
            <person name="Van Damme P."/>
            <person name="Lasa M."/>
            <person name="Polevoda B."/>
            <person name="Gazquez C."/>
            <person name="Elosegui-Artola A."/>
            <person name="Kim D.S."/>
            <person name="De Juan-Pardo E."/>
            <person name="Demeyer K."/>
            <person name="Hole K."/>
            <person name="Larrea E."/>
            <person name="Timmerman E."/>
            <person name="Prieto J."/>
            <person name="Arnesen T."/>
            <person name="Sherman F."/>
            <person name="Gevaert K."/>
            <person name="Aldabe R."/>
        </authorList>
    </citation>
    <scope>ACETYLATION [LARGE SCALE ANALYSIS] AT SER-2</scope>
    <scope>CLEAVAGE OF INITIATOR METHIONINE [LARGE SCALE ANALYSIS]</scope>
    <scope>IDENTIFICATION BY MASS SPECTROMETRY [LARGE SCALE ANALYSIS]</scope>
</reference>
<organism>
    <name type="scientific">Saccharomyces cerevisiae (strain ATCC 204508 / S288c)</name>
    <name type="common">Baker's yeast</name>
    <dbReference type="NCBI Taxonomy" id="559292"/>
    <lineage>
        <taxon>Eukaryota</taxon>
        <taxon>Fungi</taxon>
        <taxon>Dikarya</taxon>
        <taxon>Ascomycota</taxon>
        <taxon>Saccharomycotina</taxon>
        <taxon>Saccharomycetes</taxon>
        <taxon>Saccharomycetales</taxon>
        <taxon>Saccharomycetaceae</taxon>
        <taxon>Saccharomyces</taxon>
    </lineage>
</organism>
<accession>P53845</accession>
<accession>D6W0T0</accession>
<name>YIF1_YEAST</name>
<protein>
    <recommendedName>
        <fullName>Protein transport protein YIF1</fullName>
    </recommendedName>
    <alternativeName>
        <fullName>YIP1-interacting factor 1</fullName>
    </alternativeName>
</protein>
<keyword id="KW-0007">Acetylation</keyword>
<keyword id="KW-0968">Cytoplasmic vesicle</keyword>
<keyword id="KW-0256">Endoplasmic reticulum</keyword>
<keyword id="KW-0931">ER-Golgi transport</keyword>
<keyword id="KW-0333">Golgi apparatus</keyword>
<keyword id="KW-0472">Membrane</keyword>
<keyword id="KW-0653">Protein transport</keyword>
<keyword id="KW-1185">Reference proteome</keyword>
<keyword id="KW-0812">Transmembrane</keyword>
<keyword id="KW-1133">Transmembrane helix</keyword>
<keyword id="KW-0813">Transport</keyword>
<evidence type="ECO:0000255" key="1"/>
<evidence type="ECO:0000256" key="2">
    <source>
        <dbReference type="SAM" id="MobiDB-lite"/>
    </source>
</evidence>
<evidence type="ECO:0000269" key="3">
    <source>
    </source>
</evidence>
<evidence type="ECO:0000269" key="4">
    <source>
    </source>
</evidence>
<evidence type="ECO:0000269" key="5">
    <source>
    </source>
</evidence>
<evidence type="ECO:0000269" key="6">
    <source>
    </source>
</evidence>
<evidence type="ECO:0000269" key="7">
    <source>
    </source>
</evidence>
<evidence type="ECO:0000269" key="8">
    <source>
    </source>
</evidence>
<evidence type="ECO:0000269" key="9">
    <source>
    </source>
</evidence>
<evidence type="ECO:0000305" key="10"/>
<evidence type="ECO:0007744" key="11">
    <source>
    </source>
</evidence>
<gene>
    <name type="primary">YIF1</name>
    <name type="ordered locus">YNL263C</name>
    <name type="ORF">N0820</name>
</gene>
<sequence length="314" mass="35498">MSYNPYAYATSEQNGVNDRFSHTPQQQRPMQIPRNTPVNGQGNANMNANVNGSGGGFPFQDPRGSMAFQLGQSAFSNFIGQDNFNQFQETVNKATANAAGSQQISTYFQVSTRYVINKLKLILVPFLNGTKNWQRIMDSGNFLPPRDDVNSPDMYMPIMGLVTYILIWNTQQGLKGSFNPEDLYYKLSSTLAFVCLDLLILKLGLYLLIDSKIPSFSLVELLCYVGYKFVPLILAQLLTNVTMPFNLNILIKFYLFIAFGVFLLRSVKFNLLSRSGAEDDDIHVSISKSTVKKCNYFLFVYGFIWQNVLMWLMG</sequence>
<feature type="initiator methionine" description="Removed" evidence="11">
    <location>
        <position position="1"/>
    </location>
</feature>
<feature type="chain" id="PRO_0000203381" description="Protein transport protein YIF1">
    <location>
        <begin position="2"/>
        <end position="314"/>
    </location>
</feature>
<feature type="topological domain" description="Cytoplasmic" evidence="1">
    <location>
        <begin position="2"/>
        <end position="153"/>
    </location>
</feature>
<feature type="transmembrane region" description="Helical" evidence="1">
    <location>
        <begin position="154"/>
        <end position="174"/>
    </location>
</feature>
<feature type="topological domain" description="Lumenal" evidence="1">
    <location>
        <begin position="175"/>
        <end position="188"/>
    </location>
</feature>
<feature type="transmembrane region" description="Helical" evidence="1">
    <location>
        <begin position="189"/>
        <end position="209"/>
    </location>
</feature>
<feature type="topological domain" description="Cytoplasmic" evidence="1">
    <location>
        <begin position="210"/>
        <end position="217"/>
    </location>
</feature>
<feature type="transmembrane region" description="Helical" evidence="1">
    <location>
        <begin position="218"/>
        <end position="238"/>
    </location>
</feature>
<feature type="topological domain" description="Lumenal" evidence="1">
    <location>
        <begin position="239"/>
        <end position="243"/>
    </location>
</feature>
<feature type="transmembrane region" description="Helical" evidence="1">
    <location>
        <begin position="244"/>
        <end position="264"/>
    </location>
</feature>
<feature type="topological domain" description="Cytoplasmic" evidence="1">
    <location>
        <begin position="265"/>
        <end position="293"/>
    </location>
</feature>
<feature type="transmembrane region" description="Helical" evidence="1">
    <location>
        <begin position="294"/>
        <end position="313"/>
    </location>
</feature>
<feature type="topological domain" description="Lumenal" evidence="1">
    <location>
        <position position="314"/>
    </location>
</feature>
<feature type="region of interest" description="Disordered" evidence="2">
    <location>
        <begin position="9"/>
        <end position="32"/>
    </location>
</feature>
<feature type="compositionally biased region" description="Polar residues" evidence="2">
    <location>
        <begin position="10"/>
        <end position="32"/>
    </location>
</feature>
<feature type="modified residue" description="N-acetylserine" evidence="11">
    <location>
        <position position="2"/>
    </location>
</feature>
<comment type="function">
    <text evidence="7">Required for fusion of ER-derived vesicles with the Golgi during ER-to-Golgi protein transport. May be involved in proper membrane localization of Rab GTPases.</text>
</comment>
<comment type="subunit">
    <text evidence="3 5 6 7 8">Component of the YIP1-YIF1 complex, composed of at least YIF1, YIP1 and YOS1. The complex interacts with the ER to Golgi SNAREs BOS1 and SEC22. Interacts with the YIP1 family members YIP4 and YIP5, and with the Rab GTPases SEC4, YPT1, YPT6, YPT7, YPT10, YPT11, YPT31, YPT32 and YPT52. Interacts with BTN2 and SNX3.</text>
</comment>
<comment type="interaction">
    <interactant intactId="EBI-28230">
        <id>P53845</id>
    </interactant>
    <interactant intactId="EBI-3796">
        <id>P53286</id>
        <label>BTN2</label>
    </interactant>
    <organismsDiffer>false</organismsDiffer>
    <experiments>2</experiments>
</comment>
<comment type="interaction">
    <interactant intactId="EBI-28230">
        <id>P53845</id>
    </interactant>
    <interactant intactId="EBI-16858">
        <id>P07560</id>
        <label>SEC4</label>
    </interactant>
    <organismsDiffer>false</organismsDiffer>
    <experiments>2</experiments>
</comment>
<comment type="interaction">
    <interactant intactId="EBI-28230">
        <id>P53845</id>
    </interactant>
    <interactant intactId="EBI-20232">
        <id>P32912</id>
        <label>VAM7</label>
    </interactant>
    <organismsDiffer>false</organismsDiffer>
    <experiments>3</experiments>
</comment>
<comment type="interaction">
    <interactant intactId="EBI-28230">
        <id>P53845</id>
    </interactant>
    <interactant intactId="EBI-20366">
        <id>P32913</id>
        <label>VPS17</label>
    </interactant>
    <organismsDiffer>false</organismsDiffer>
    <experiments>2</experiments>
</comment>
<comment type="interaction">
    <interactant intactId="EBI-28230">
        <id>P53845</id>
    </interactant>
    <interactant intactId="EBI-25295">
        <id>P53039</id>
        <label>YIP1</label>
    </interactant>
    <organismsDiffer>false</organismsDiffer>
    <experiments>5</experiments>
</comment>
<comment type="interaction">
    <interactant intactId="EBI-28230">
        <id>P53845</id>
    </interactant>
    <interactant intactId="EBI-24124">
        <id>P53093</id>
        <label>YIP4</label>
    </interactant>
    <organismsDiffer>false</organismsDiffer>
    <experiments>2</experiments>
</comment>
<comment type="interaction">
    <interactant intactId="EBI-28230">
        <id>P53845</id>
    </interactant>
    <interactant intactId="EBI-29496">
        <id>P01123</id>
        <label>YPT1</label>
    </interactant>
    <organismsDiffer>false</organismsDiffer>
    <experiments>3</experiments>
</comment>
<comment type="interaction">
    <interactant intactId="EBI-28230">
        <id>P53845</id>
    </interactant>
    <interactant intactId="EBI-29357">
        <id>P38146</id>
        <label>YPT10</label>
    </interactant>
    <organismsDiffer>false</organismsDiffer>
    <experiments>2</experiments>
</comment>
<comment type="interaction">
    <interactant intactId="EBI-28230">
        <id>P53845</id>
    </interactant>
    <interactant intactId="EBI-29379">
        <id>P38555</id>
        <label>YPT31</label>
    </interactant>
    <organismsDiffer>false</organismsDiffer>
    <experiments>3</experiments>
</comment>
<comment type="interaction">
    <interactant intactId="EBI-28230">
        <id>P53845</id>
    </interactant>
    <interactant intactId="EBI-29384">
        <id>P51996</id>
        <label>YPT32</label>
    </interactant>
    <organismsDiffer>false</organismsDiffer>
    <experiments>2</experiments>
</comment>
<comment type="interaction">
    <interactant intactId="EBI-28230">
        <id>P53845</id>
    </interactant>
    <interactant intactId="EBI-24665">
        <id>P38815</id>
        <label>YPT35</label>
    </interactant>
    <organismsDiffer>false</organismsDiffer>
    <experiments>4</experiments>
</comment>
<comment type="interaction">
    <interactant intactId="EBI-28230">
        <id>P53845</id>
    </interactant>
    <interactant intactId="EBI-29415">
        <id>P36019</id>
        <label>YPT53</label>
    </interactant>
    <organismsDiffer>false</organismsDiffer>
    <experiments>2</experiments>
</comment>
<comment type="interaction">
    <interactant intactId="EBI-28230">
        <id>P53845</id>
    </interactant>
    <interactant intactId="EBI-29509">
        <id>P32939</id>
        <label>YPT7</label>
    </interactant>
    <organismsDiffer>false</organismsDiffer>
    <experiments>2</experiments>
</comment>
<comment type="subcellular location">
    <subcellularLocation>
        <location evidence="4">Endoplasmic reticulum membrane</location>
        <topology evidence="1">Multi-pass membrane protein</topology>
    </subcellularLocation>
    <subcellularLocation>
        <location evidence="3 9">Golgi apparatus membrane</location>
        <topology evidence="1">Multi-pass membrane protein</topology>
    </subcellularLocation>
    <subcellularLocation>
        <location evidence="4">Cytoplasmic vesicle</location>
        <location evidence="4">COPII-coated vesicle</location>
    </subcellularLocation>
    <text evidence="4">Also found in ER-derived COPII-coated vesicles.</text>
</comment>
<comment type="similarity">
    <text evidence="10">Belongs to the YIF1 family.</text>
</comment>
<dbReference type="EMBL" id="X92494">
    <property type="protein sequence ID" value="CAA63234.1"/>
    <property type="molecule type" value="Genomic_DNA"/>
</dbReference>
<dbReference type="EMBL" id="Z71539">
    <property type="protein sequence ID" value="CAA96170.1"/>
    <property type="molecule type" value="Genomic_DNA"/>
</dbReference>
<dbReference type="EMBL" id="BK006947">
    <property type="protein sequence ID" value="DAA10296.1"/>
    <property type="molecule type" value="Genomic_DNA"/>
</dbReference>
<dbReference type="PIR" id="S60918">
    <property type="entry name" value="S60918"/>
</dbReference>
<dbReference type="RefSeq" id="NP_014136.1">
    <property type="nucleotide sequence ID" value="NM_001183101.1"/>
</dbReference>
<dbReference type="BioGRID" id="35576">
    <property type="interactions" value="71"/>
</dbReference>
<dbReference type="DIP" id="DIP-1729N"/>
<dbReference type="FunCoup" id="P53845">
    <property type="interactions" value="593"/>
</dbReference>
<dbReference type="IntAct" id="P53845">
    <property type="interactions" value="36"/>
</dbReference>
<dbReference type="MINT" id="P53845"/>
<dbReference type="STRING" id="4932.YNL263C"/>
<dbReference type="iPTMnet" id="P53845"/>
<dbReference type="PaxDb" id="4932-YNL263C"/>
<dbReference type="PeptideAtlas" id="P53845"/>
<dbReference type="EnsemblFungi" id="YNL263C_mRNA">
    <property type="protein sequence ID" value="YNL263C"/>
    <property type="gene ID" value="YNL263C"/>
</dbReference>
<dbReference type="GeneID" id="855458"/>
<dbReference type="KEGG" id="sce:YNL263C"/>
<dbReference type="AGR" id="SGD:S000005207"/>
<dbReference type="SGD" id="S000005207">
    <property type="gene designation" value="YIF1"/>
</dbReference>
<dbReference type="VEuPathDB" id="FungiDB:YNL263C"/>
<dbReference type="eggNOG" id="KOG3094">
    <property type="taxonomic scope" value="Eukaryota"/>
</dbReference>
<dbReference type="GeneTree" id="ENSGT00390000009423"/>
<dbReference type="HOGENOM" id="CLU_047877_2_1_1"/>
<dbReference type="InParanoid" id="P53845"/>
<dbReference type="OMA" id="SGYKFVH"/>
<dbReference type="OrthoDB" id="337750at2759"/>
<dbReference type="BioCyc" id="YEAST:G3O-33259-MONOMER"/>
<dbReference type="BioGRID-ORCS" id="855458">
    <property type="hits" value="5 hits in 10 CRISPR screens"/>
</dbReference>
<dbReference type="PRO" id="PR:P53845"/>
<dbReference type="Proteomes" id="UP000002311">
    <property type="component" value="Chromosome XIV"/>
</dbReference>
<dbReference type="RNAct" id="P53845">
    <property type="molecule type" value="protein"/>
</dbReference>
<dbReference type="GO" id="GO:0030134">
    <property type="term" value="C:COPII-coated ER to Golgi transport vesicle"/>
    <property type="evidence" value="ECO:0000314"/>
    <property type="project" value="SGD"/>
</dbReference>
<dbReference type="GO" id="GO:0005789">
    <property type="term" value="C:endoplasmic reticulum membrane"/>
    <property type="evidence" value="ECO:0000353"/>
    <property type="project" value="SGD"/>
</dbReference>
<dbReference type="GO" id="GO:0005793">
    <property type="term" value="C:endoplasmic reticulum-Golgi intermediate compartment"/>
    <property type="evidence" value="ECO:0000318"/>
    <property type="project" value="GO_Central"/>
</dbReference>
<dbReference type="GO" id="GO:0000139">
    <property type="term" value="C:Golgi membrane"/>
    <property type="evidence" value="ECO:0000314"/>
    <property type="project" value="SGD"/>
</dbReference>
<dbReference type="GO" id="GO:0006888">
    <property type="term" value="P:endoplasmic reticulum to Golgi vesicle-mediated transport"/>
    <property type="evidence" value="ECO:0000315"/>
    <property type="project" value="SGD"/>
</dbReference>
<dbReference type="GO" id="GO:0015031">
    <property type="term" value="P:protein transport"/>
    <property type="evidence" value="ECO:0007669"/>
    <property type="project" value="UniProtKB-KW"/>
</dbReference>
<dbReference type="InterPro" id="IPR005578">
    <property type="entry name" value="Yif1_fam"/>
</dbReference>
<dbReference type="PANTHER" id="PTHR14083">
    <property type="entry name" value="YIP1 INTERACTING FACTOR HOMOLOG YIF1 PROTEIN"/>
    <property type="match status" value="1"/>
</dbReference>
<dbReference type="PANTHER" id="PTHR14083:SF0">
    <property type="entry name" value="YIP1D-INTERACTING FACTOR 1, ISOFORM C"/>
    <property type="match status" value="1"/>
</dbReference>
<dbReference type="Pfam" id="PF03878">
    <property type="entry name" value="YIF1"/>
    <property type="match status" value="1"/>
</dbReference>